<feature type="chain" id="PRO_0000241081" description="Glutamyl-tRNA(Gln) amidotransferase subunit A">
    <location>
        <begin position="1"/>
        <end position="496"/>
    </location>
</feature>
<feature type="active site" description="Charge relay system" evidence="1">
    <location>
        <position position="75"/>
    </location>
</feature>
<feature type="active site" description="Charge relay system" evidence="1">
    <location>
        <position position="150"/>
    </location>
</feature>
<feature type="active site" description="Acyl-ester intermediate" evidence="1">
    <location>
        <position position="174"/>
    </location>
</feature>
<accession>Q3JXC1</accession>
<protein>
    <recommendedName>
        <fullName evidence="1">Glutamyl-tRNA(Gln) amidotransferase subunit A</fullName>
        <shortName evidence="1">Glu-ADT subunit A</shortName>
        <ecNumber evidence="1">6.3.5.7</ecNumber>
    </recommendedName>
</protein>
<comment type="function">
    <text evidence="1">Allows the formation of correctly charged Gln-tRNA(Gln) through the transamidation of misacylated Glu-tRNA(Gln) in organisms which lack glutaminyl-tRNA synthetase. The reaction takes place in the presence of glutamine and ATP through an activated gamma-phospho-Glu-tRNA(Gln).</text>
</comment>
<comment type="catalytic activity">
    <reaction evidence="1">
        <text>L-glutamyl-tRNA(Gln) + L-glutamine + ATP + H2O = L-glutaminyl-tRNA(Gln) + L-glutamate + ADP + phosphate + H(+)</text>
        <dbReference type="Rhea" id="RHEA:17521"/>
        <dbReference type="Rhea" id="RHEA-COMP:9681"/>
        <dbReference type="Rhea" id="RHEA-COMP:9684"/>
        <dbReference type="ChEBI" id="CHEBI:15377"/>
        <dbReference type="ChEBI" id="CHEBI:15378"/>
        <dbReference type="ChEBI" id="CHEBI:29985"/>
        <dbReference type="ChEBI" id="CHEBI:30616"/>
        <dbReference type="ChEBI" id="CHEBI:43474"/>
        <dbReference type="ChEBI" id="CHEBI:58359"/>
        <dbReference type="ChEBI" id="CHEBI:78520"/>
        <dbReference type="ChEBI" id="CHEBI:78521"/>
        <dbReference type="ChEBI" id="CHEBI:456216"/>
        <dbReference type="EC" id="6.3.5.7"/>
    </reaction>
</comment>
<comment type="subunit">
    <text evidence="1">Heterotrimer of A, B and C subunits.</text>
</comment>
<comment type="similarity">
    <text evidence="1">Belongs to the amidase family. GatA subfamily.</text>
</comment>
<reference key="1">
    <citation type="journal article" date="2010" name="Genome Biol. Evol.">
        <title>Continuing evolution of Burkholderia mallei through genome reduction and large-scale rearrangements.</title>
        <authorList>
            <person name="Losada L."/>
            <person name="Ronning C.M."/>
            <person name="DeShazer D."/>
            <person name="Woods D."/>
            <person name="Fedorova N."/>
            <person name="Kim H.S."/>
            <person name="Shabalina S.A."/>
            <person name="Pearson T.R."/>
            <person name="Brinkac L."/>
            <person name="Tan P."/>
            <person name="Nandi T."/>
            <person name="Crabtree J."/>
            <person name="Badger J."/>
            <person name="Beckstrom-Sternberg S."/>
            <person name="Saqib M."/>
            <person name="Schutzer S.E."/>
            <person name="Keim P."/>
            <person name="Nierman W.C."/>
        </authorList>
    </citation>
    <scope>NUCLEOTIDE SEQUENCE [LARGE SCALE GENOMIC DNA]</scope>
    <source>
        <strain>1710b</strain>
    </source>
</reference>
<sequence length="496" mass="52236">MHAKSLTELRAALDAKECSAVELAQHYLKRIDAARDLNAFVHVDAELTLAQAKAADAALANGEAGPLAGLPIAHKDVFVTRGWRSTAGSKMLANYASPFDATVVARLSAAGMVTLGKTNMDEFAMGSSNENSAFGPVKNPWDTSAVPGGSSGGSSAAVAARLAPAATGTDTGGSIRQPASFAGVTGIKPTYGRVSRYGMIAFASSLDQGGPMARSAADCALLLNAMAGFDERDSTSLERADEDYTRHLGKAWAAGGDAGKPLAGLRIGLPAEYFGAGLADDVRAAIDAALKTYEALGATLVPVSLPKTELSIPVYYVIAPAEASSNLSRFDGVRYGHRAAEYRDLLDMYKKSRAEGFGPEVKRRILVGTYVLSHGYYDAYYLQAQKIRRIIAQDFQEAFKSCDVIMGPASPTVAWDIGAKGDDPVQMYLADIYTLSVSLAGLPGMSVPCGFGAGANAKRPVGLQIIGNYFDEARMLQVADAFQRATDWHVQEPAGV</sequence>
<gene>
    <name evidence="1" type="primary">gatA</name>
    <name type="ordered locus">BURPS1710b_0368</name>
</gene>
<dbReference type="EC" id="6.3.5.7" evidence="1"/>
<dbReference type="EMBL" id="CP000124">
    <property type="protein sequence ID" value="ABA48820.1"/>
    <property type="molecule type" value="Genomic_DNA"/>
</dbReference>
<dbReference type="RefSeq" id="WP_004525859.1">
    <property type="nucleotide sequence ID" value="NC_007434.1"/>
</dbReference>
<dbReference type="SMR" id="Q3JXC1"/>
<dbReference type="EnsemblBacteria" id="ABA48820">
    <property type="protein sequence ID" value="ABA48820"/>
    <property type="gene ID" value="BURPS1710b_0368"/>
</dbReference>
<dbReference type="GeneID" id="93058696"/>
<dbReference type="KEGG" id="bpm:BURPS1710b_0368"/>
<dbReference type="HOGENOM" id="CLU_009600_0_3_4"/>
<dbReference type="Proteomes" id="UP000002700">
    <property type="component" value="Chromosome I"/>
</dbReference>
<dbReference type="GO" id="GO:0030956">
    <property type="term" value="C:glutamyl-tRNA(Gln) amidotransferase complex"/>
    <property type="evidence" value="ECO:0007669"/>
    <property type="project" value="InterPro"/>
</dbReference>
<dbReference type="GO" id="GO:0005524">
    <property type="term" value="F:ATP binding"/>
    <property type="evidence" value="ECO:0007669"/>
    <property type="project" value="UniProtKB-KW"/>
</dbReference>
<dbReference type="GO" id="GO:0050567">
    <property type="term" value="F:glutaminyl-tRNA synthase (glutamine-hydrolyzing) activity"/>
    <property type="evidence" value="ECO:0007669"/>
    <property type="project" value="UniProtKB-UniRule"/>
</dbReference>
<dbReference type="GO" id="GO:0006412">
    <property type="term" value="P:translation"/>
    <property type="evidence" value="ECO:0007669"/>
    <property type="project" value="UniProtKB-UniRule"/>
</dbReference>
<dbReference type="Gene3D" id="3.90.1300.10">
    <property type="entry name" value="Amidase signature (AS) domain"/>
    <property type="match status" value="1"/>
</dbReference>
<dbReference type="HAMAP" id="MF_00120">
    <property type="entry name" value="GatA"/>
    <property type="match status" value="1"/>
</dbReference>
<dbReference type="InterPro" id="IPR000120">
    <property type="entry name" value="Amidase"/>
</dbReference>
<dbReference type="InterPro" id="IPR020556">
    <property type="entry name" value="Amidase_CS"/>
</dbReference>
<dbReference type="InterPro" id="IPR023631">
    <property type="entry name" value="Amidase_dom"/>
</dbReference>
<dbReference type="InterPro" id="IPR036928">
    <property type="entry name" value="AS_sf"/>
</dbReference>
<dbReference type="InterPro" id="IPR004412">
    <property type="entry name" value="GatA"/>
</dbReference>
<dbReference type="NCBIfam" id="TIGR00132">
    <property type="entry name" value="gatA"/>
    <property type="match status" value="1"/>
</dbReference>
<dbReference type="PANTHER" id="PTHR11895:SF151">
    <property type="entry name" value="GLUTAMYL-TRNA(GLN) AMIDOTRANSFERASE SUBUNIT A"/>
    <property type="match status" value="1"/>
</dbReference>
<dbReference type="PANTHER" id="PTHR11895">
    <property type="entry name" value="TRANSAMIDASE"/>
    <property type="match status" value="1"/>
</dbReference>
<dbReference type="Pfam" id="PF01425">
    <property type="entry name" value="Amidase"/>
    <property type="match status" value="1"/>
</dbReference>
<dbReference type="SUPFAM" id="SSF75304">
    <property type="entry name" value="Amidase signature (AS) enzymes"/>
    <property type="match status" value="1"/>
</dbReference>
<dbReference type="PROSITE" id="PS00571">
    <property type="entry name" value="AMIDASES"/>
    <property type="match status" value="1"/>
</dbReference>
<name>GATA_BURP1</name>
<keyword id="KW-0067">ATP-binding</keyword>
<keyword id="KW-0436">Ligase</keyword>
<keyword id="KW-0547">Nucleotide-binding</keyword>
<keyword id="KW-0648">Protein biosynthesis</keyword>
<evidence type="ECO:0000255" key="1">
    <source>
        <dbReference type="HAMAP-Rule" id="MF_00120"/>
    </source>
</evidence>
<organism>
    <name type="scientific">Burkholderia pseudomallei (strain 1710b)</name>
    <dbReference type="NCBI Taxonomy" id="320372"/>
    <lineage>
        <taxon>Bacteria</taxon>
        <taxon>Pseudomonadati</taxon>
        <taxon>Pseudomonadota</taxon>
        <taxon>Betaproteobacteria</taxon>
        <taxon>Burkholderiales</taxon>
        <taxon>Burkholderiaceae</taxon>
        <taxon>Burkholderia</taxon>
        <taxon>pseudomallei group</taxon>
    </lineage>
</organism>
<proteinExistence type="inferred from homology"/>